<proteinExistence type="evidence at transcript level"/>
<reference key="1">
    <citation type="submission" date="2007-03" db="EMBL/GenBank/DDBJ databases">
        <authorList>
            <consortium name="NIH - Zebrafish Gene Collection (ZGC) project"/>
        </authorList>
    </citation>
    <scope>NUCLEOTIDE SEQUENCE [LARGE SCALE MRNA]</scope>
    <source>
        <tissue>Embryo</tissue>
    </source>
</reference>
<organism>
    <name type="scientific">Danio rerio</name>
    <name type="common">Zebrafish</name>
    <name type="synonym">Brachydanio rerio</name>
    <dbReference type="NCBI Taxonomy" id="7955"/>
    <lineage>
        <taxon>Eukaryota</taxon>
        <taxon>Metazoa</taxon>
        <taxon>Chordata</taxon>
        <taxon>Craniata</taxon>
        <taxon>Vertebrata</taxon>
        <taxon>Euteleostomi</taxon>
        <taxon>Actinopterygii</taxon>
        <taxon>Neopterygii</taxon>
        <taxon>Teleostei</taxon>
        <taxon>Ostariophysi</taxon>
        <taxon>Cypriniformes</taxon>
        <taxon>Danionidae</taxon>
        <taxon>Danioninae</taxon>
        <taxon>Danio</taxon>
    </lineage>
</organism>
<comment type="function">
    <text evidence="3">Catalyzes the synthesis of N-acetylaspartate acid (NAA) from L-aspartate and acetyl-CoA.</text>
</comment>
<comment type="catalytic activity">
    <reaction evidence="3">
        <text>L-aspartate + acetyl-CoA = N-acetyl-L-aspartate + CoA + H(+)</text>
        <dbReference type="Rhea" id="RHEA:14165"/>
        <dbReference type="ChEBI" id="CHEBI:15378"/>
        <dbReference type="ChEBI" id="CHEBI:16953"/>
        <dbReference type="ChEBI" id="CHEBI:29991"/>
        <dbReference type="ChEBI" id="CHEBI:57287"/>
        <dbReference type="ChEBI" id="CHEBI:57288"/>
        <dbReference type="EC" id="2.3.1.17"/>
    </reaction>
    <physiologicalReaction direction="left-to-right" evidence="3">
        <dbReference type="Rhea" id="RHEA:14166"/>
    </physiologicalReaction>
</comment>
<comment type="subcellular location">
    <subcellularLocation>
        <location evidence="3">Cytoplasm</location>
    </subcellularLocation>
    <subcellularLocation>
        <location evidence="1">Microsome membrane</location>
        <topology evidence="4">Single-pass membrane protein</topology>
    </subcellularLocation>
    <subcellularLocation>
        <location evidence="3">Mitochondrion membrane</location>
        <topology evidence="4">Single-pass membrane protein</topology>
    </subcellularLocation>
    <subcellularLocation>
        <location evidence="2">Endoplasmic reticulum membrane</location>
        <topology evidence="4">Single-pass membrane protein</topology>
    </subcellularLocation>
</comment>
<comment type="similarity">
    <text evidence="6">Belongs to the NAT8 family.</text>
</comment>
<protein>
    <recommendedName>
        <fullName>N-acetylaspartate synthetase</fullName>
        <shortName>NAA synthetase</shortName>
        <ecNumber evidence="3">2.3.1.17</ecNumber>
    </recommendedName>
    <alternativeName>
        <fullName>N-acetyltransferase 8-like protein</fullName>
    </alternativeName>
</protein>
<name>NAT8L_DANRE</name>
<feature type="chain" id="PRO_0000305231" description="N-acetylaspartate synthetase">
    <location>
        <begin position="1"/>
        <end position="282"/>
    </location>
</feature>
<feature type="transmembrane region" description="Helical" evidence="4">
    <location>
        <begin position="103"/>
        <end position="125"/>
    </location>
</feature>
<feature type="domain" description="N-acetyltransferase" evidence="5">
    <location>
        <begin position="110"/>
        <end position="269"/>
    </location>
</feature>
<dbReference type="EC" id="2.3.1.17" evidence="3"/>
<dbReference type="EMBL" id="BC135040">
    <property type="protein sequence ID" value="AAI35041.1"/>
    <property type="molecule type" value="mRNA"/>
</dbReference>
<dbReference type="RefSeq" id="NP_001077308.1">
    <property type="nucleotide sequence ID" value="NM_001083839.2"/>
</dbReference>
<dbReference type="FunCoup" id="A4IGD2">
    <property type="interactions" value="48"/>
</dbReference>
<dbReference type="STRING" id="7955.ENSDARP00000112150"/>
<dbReference type="PaxDb" id="7955-ENSDARP00000112150"/>
<dbReference type="Ensembl" id="ENSDART00000121684">
    <property type="protein sequence ID" value="ENSDARP00000112150"/>
    <property type="gene ID" value="ENSDARG00000077256"/>
</dbReference>
<dbReference type="Ensembl" id="ENSDART00000185657">
    <property type="protein sequence ID" value="ENSDARP00000150858"/>
    <property type="gene ID" value="ENSDARG00000115322"/>
</dbReference>
<dbReference type="GeneID" id="564754"/>
<dbReference type="KEGG" id="dre:564754"/>
<dbReference type="AGR" id="ZFIN:ZDB-GENE-030729-4"/>
<dbReference type="CTD" id="339983"/>
<dbReference type="ZFIN" id="ZDB-GENE-030729-4">
    <property type="gene designation" value="nat8l"/>
</dbReference>
<dbReference type="eggNOG" id="KOG3139">
    <property type="taxonomic scope" value="Eukaryota"/>
</dbReference>
<dbReference type="HOGENOM" id="CLU_013985_10_0_1"/>
<dbReference type="InParanoid" id="A4IGD2"/>
<dbReference type="OMA" id="FHEGIME"/>
<dbReference type="OrthoDB" id="41532at2759"/>
<dbReference type="PhylomeDB" id="A4IGD2"/>
<dbReference type="Reactome" id="R-DRE-8963693">
    <property type="pathway name" value="Aspartate and asparagine metabolism"/>
</dbReference>
<dbReference type="PRO" id="PR:A4IGD2"/>
<dbReference type="Proteomes" id="UP000000437">
    <property type="component" value="Alternate scaffold 7"/>
</dbReference>
<dbReference type="Proteomes" id="UP000000437">
    <property type="component" value="Chromosome 7"/>
</dbReference>
<dbReference type="Bgee" id="ENSDARG00000077256">
    <property type="expression patterns" value="Expressed in brain and 12 other cell types or tissues"/>
</dbReference>
<dbReference type="GO" id="GO:0005789">
    <property type="term" value="C:endoplasmic reticulum membrane"/>
    <property type="evidence" value="ECO:0007669"/>
    <property type="project" value="UniProtKB-SubCell"/>
</dbReference>
<dbReference type="GO" id="GO:0043231">
    <property type="term" value="C:intracellular membrane-bounded organelle"/>
    <property type="evidence" value="ECO:0000250"/>
    <property type="project" value="UniProtKB"/>
</dbReference>
<dbReference type="GO" id="GO:0031966">
    <property type="term" value="C:mitochondrial membrane"/>
    <property type="evidence" value="ECO:0000318"/>
    <property type="project" value="GO_Central"/>
</dbReference>
<dbReference type="GO" id="GO:0005739">
    <property type="term" value="C:mitochondrion"/>
    <property type="evidence" value="ECO:0000250"/>
    <property type="project" value="UniProtKB"/>
</dbReference>
<dbReference type="GO" id="GO:0017188">
    <property type="term" value="F:L-aspartate N-acetyltransferase activity"/>
    <property type="evidence" value="ECO:0000250"/>
    <property type="project" value="UniProtKB"/>
</dbReference>
<dbReference type="CDD" id="cd04301">
    <property type="entry name" value="NAT_SF"/>
    <property type="match status" value="1"/>
</dbReference>
<dbReference type="Gene3D" id="3.40.630.30">
    <property type="match status" value="1"/>
</dbReference>
<dbReference type="InterPro" id="IPR016181">
    <property type="entry name" value="Acyl_CoA_acyltransferase"/>
</dbReference>
<dbReference type="InterPro" id="IPR000182">
    <property type="entry name" value="GNAT_dom"/>
</dbReference>
<dbReference type="InterPro" id="IPR050769">
    <property type="entry name" value="NAT_camello-type"/>
</dbReference>
<dbReference type="PANTHER" id="PTHR13947">
    <property type="entry name" value="GNAT FAMILY N-ACETYLTRANSFERASE"/>
    <property type="match status" value="1"/>
</dbReference>
<dbReference type="PANTHER" id="PTHR13947:SF11">
    <property type="entry name" value="N-ACETYLASPARTATE SYNTHETASE"/>
    <property type="match status" value="1"/>
</dbReference>
<dbReference type="Pfam" id="PF00583">
    <property type="entry name" value="Acetyltransf_1"/>
    <property type="match status" value="1"/>
</dbReference>
<dbReference type="SUPFAM" id="SSF55729">
    <property type="entry name" value="Acyl-CoA N-acyltransferases (Nat)"/>
    <property type="match status" value="1"/>
</dbReference>
<dbReference type="PROSITE" id="PS51186">
    <property type="entry name" value="GNAT"/>
    <property type="match status" value="1"/>
</dbReference>
<accession>A4IGD2</accession>
<evidence type="ECO:0000250" key="1">
    <source>
        <dbReference type="UniProtKB" id="D3ZVU9"/>
    </source>
</evidence>
<evidence type="ECO:0000250" key="2">
    <source>
        <dbReference type="UniProtKB" id="Q3UGX3"/>
    </source>
</evidence>
<evidence type="ECO:0000250" key="3">
    <source>
        <dbReference type="UniProtKB" id="Q8N9F0"/>
    </source>
</evidence>
<evidence type="ECO:0000255" key="4"/>
<evidence type="ECO:0000255" key="5">
    <source>
        <dbReference type="PROSITE-ProRule" id="PRU00532"/>
    </source>
</evidence>
<evidence type="ECO:0000305" key="6"/>
<gene>
    <name type="primary">nat8l</name>
    <name type="ORF">zgc:162648</name>
</gene>
<keyword id="KW-0012">Acyltransferase</keyword>
<keyword id="KW-0963">Cytoplasm</keyword>
<keyword id="KW-0256">Endoplasmic reticulum</keyword>
<keyword id="KW-0472">Membrane</keyword>
<keyword id="KW-0492">Microsome</keyword>
<keyword id="KW-0496">Mitochondrion</keyword>
<keyword id="KW-1185">Reference proteome</keyword>
<keyword id="KW-0808">Transferase</keyword>
<keyword id="KW-0812">Transmembrane</keyword>
<keyword id="KW-1133">Transmembrane helix</keyword>
<sequence length="282" mass="32270">MHCSSPKMVCETKIVADEHEAIAGTKKDSIIVSSSQMWTSSSASPSALESKIEKRNQVFIREFERSDHEEVRRIFNEGIMERIPNSAFRGLKQQTTTQFMYAFLTVMCYVMTKSFTLTFCAPFILMGARYYYSRKVILSYLDCALHTDMADIEAYYMKPTGSCFWVAVLQGQVVGIVAAQSREDDNTVELRRMSVDSHFRGKGIAKALGRRVIEFAMLNNYSAVVLGTTAVKMAAHKLYESLGFRRVGETEDYTLPGMTRSPLERLFFQIRYSHYRLQLHEE</sequence>